<organism>
    <name type="scientific">Staphylococcus aureus (strain NCTC 8325 / PS 47)</name>
    <dbReference type="NCBI Taxonomy" id="93061"/>
    <lineage>
        <taxon>Bacteria</taxon>
        <taxon>Bacillati</taxon>
        <taxon>Bacillota</taxon>
        <taxon>Bacilli</taxon>
        <taxon>Bacillales</taxon>
        <taxon>Staphylococcaceae</taxon>
        <taxon>Staphylococcus</taxon>
    </lineage>
</organism>
<feature type="chain" id="PRO_0000250266" description="Undecaprenyl-diphosphatase">
    <location>
        <begin position="1"/>
        <end position="291"/>
    </location>
</feature>
<feature type="transmembrane region" description="Helical" evidence="1">
    <location>
        <begin position="1"/>
        <end position="21"/>
    </location>
</feature>
<feature type="transmembrane region" description="Helical" evidence="1">
    <location>
        <begin position="48"/>
        <end position="68"/>
    </location>
</feature>
<feature type="transmembrane region" description="Helical" evidence="1">
    <location>
        <begin position="102"/>
        <end position="122"/>
    </location>
</feature>
<feature type="transmembrane region" description="Helical" evidence="1">
    <location>
        <begin position="126"/>
        <end position="146"/>
    </location>
</feature>
<feature type="transmembrane region" description="Helical" evidence="1">
    <location>
        <begin position="162"/>
        <end position="182"/>
    </location>
</feature>
<feature type="transmembrane region" description="Helical" evidence="1">
    <location>
        <begin position="203"/>
        <end position="223"/>
    </location>
</feature>
<feature type="transmembrane region" description="Helical" evidence="1">
    <location>
        <begin position="231"/>
        <end position="251"/>
    </location>
</feature>
<feature type="transmembrane region" description="Helical" evidence="1">
    <location>
        <begin position="267"/>
        <end position="287"/>
    </location>
</feature>
<gene>
    <name evidence="1" type="primary">uppP</name>
    <name type="ordered locus">SAOUHSC_00691</name>
</gene>
<sequence>MFIIELIKGIILGVVEGLTEFAPVSSTGHMILVDDMWLKSSEFLGSQSAFTFKIVIQLGSVFAAAWVFRERFLEILHIGKHKHVEGDNDQQRRSKPRRLNLLHVLVGMVPAGILGLLFDDFIEEHLFSVPTVMIGLFVGAIYMIIADKYSAKVKNPQTVDQISYFQAFVIGISQAVAMWPGFSRSGSTISTGVLMKLNHKAASDFTFIMAVPIMLAASGLSLLKHYQDIQIADIPFYILGFLAAFTVGLIAIKTFLHLINKIKLIPFAIYRIVLVIFIAILYFGFGIGKGI</sequence>
<evidence type="ECO:0000255" key="1">
    <source>
        <dbReference type="HAMAP-Rule" id="MF_01006"/>
    </source>
</evidence>
<name>UPPP_STAA8</name>
<comment type="function">
    <text evidence="1">Catalyzes the dephosphorylation of undecaprenyl diphosphate (UPP). Confers resistance to bacitracin.</text>
</comment>
<comment type="catalytic activity">
    <reaction evidence="1">
        <text>di-trans,octa-cis-undecaprenyl diphosphate + H2O = di-trans,octa-cis-undecaprenyl phosphate + phosphate + H(+)</text>
        <dbReference type="Rhea" id="RHEA:28094"/>
        <dbReference type="ChEBI" id="CHEBI:15377"/>
        <dbReference type="ChEBI" id="CHEBI:15378"/>
        <dbReference type="ChEBI" id="CHEBI:43474"/>
        <dbReference type="ChEBI" id="CHEBI:58405"/>
        <dbReference type="ChEBI" id="CHEBI:60392"/>
        <dbReference type="EC" id="3.6.1.27"/>
    </reaction>
</comment>
<comment type="subcellular location">
    <subcellularLocation>
        <location evidence="1">Cell membrane</location>
        <topology evidence="1">Multi-pass membrane protein</topology>
    </subcellularLocation>
</comment>
<comment type="miscellaneous">
    <text>Bacitracin is thought to be involved in the inhibition of peptidoglycan synthesis by sequestering undecaprenyl diphosphate, thereby reducing the pool of lipid carrier available.</text>
</comment>
<comment type="similarity">
    <text evidence="1">Belongs to the UppP family.</text>
</comment>
<protein>
    <recommendedName>
        <fullName evidence="1">Undecaprenyl-diphosphatase</fullName>
        <ecNumber evidence="1">3.6.1.27</ecNumber>
    </recommendedName>
    <alternativeName>
        <fullName evidence="1">Bacitracin resistance protein</fullName>
    </alternativeName>
    <alternativeName>
        <fullName evidence="1">Undecaprenyl pyrophosphate phosphatase</fullName>
    </alternativeName>
</protein>
<accession>Q2G0B4</accession>
<reference key="1">
    <citation type="book" date="2006" name="Gram positive pathogens, 2nd edition">
        <title>The Staphylococcus aureus NCTC 8325 genome.</title>
        <editorList>
            <person name="Fischetti V."/>
            <person name="Novick R."/>
            <person name="Ferretti J."/>
            <person name="Portnoy D."/>
            <person name="Rood J."/>
        </editorList>
        <authorList>
            <person name="Gillaspy A.F."/>
            <person name="Worrell V."/>
            <person name="Orvis J."/>
            <person name="Roe B.A."/>
            <person name="Dyer D.W."/>
            <person name="Iandolo J.J."/>
        </authorList>
    </citation>
    <scope>NUCLEOTIDE SEQUENCE [LARGE SCALE GENOMIC DNA]</scope>
    <source>
        <strain>NCTC 8325 / PS 47</strain>
    </source>
</reference>
<dbReference type="EC" id="3.6.1.27" evidence="1"/>
<dbReference type="EMBL" id="CP000253">
    <property type="protein sequence ID" value="ABD29824.1"/>
    <property type="molecule type" value="Genomic_DNA"/>
</dbReference>
<dbReference type="RefSeq" id="WP_000469890.1">
    <property type="nucleotide sequence ID" value="NZ_LS483365.1"/>
</dbReference>
<dbReference type="RefSeq" id="YP_499250.1">
    <property type="nucleotide sequence ID" value="NC_007795.1"/>
</dbReference>
<dbReference type="SMR" id="Q2G0B4"/>
<dbReference type="STRING" id="93061.SAOUHSC_00691"/>
<dbReference type="PaxDb" id="1280-SAXN108_0752"/>
<dbReference type="GeneID" id="3920995"/>
<dbReference type="KEGG" id="sao:SAOUHSC_00691"/>
<dbReference type="PATRIC" id="fig|93061.5.peg.621"/>
<dbReference type="eggNOG" id="COG1968">
    <property type="taxonomic scope" value="Bacteria"/>
</dbReference>
<dbReference type="HOGENOM" id="CLU_060296_2_0_9"/>
<dbReference type="OrthoDB" id="9808289at2"/>
<dbReference type="PRO" id="PR:Q2G0B4"/>
<dbReference type="Proteomes" id="UP000008816">
    <property type="component" value="Chromosome"/>
</dbReference>
<dbReference type="GO" id="GO:0005886">
    <property type="term" value="C:plasma membrane"/>
    <property type="evidence" value="ECO:0000318"/>
    <property type="project" value="GO_Central"/>
</dbReference>
<dbReference type="GO" id="GO:0050380">
    <property type="term" value="F:undecaprenyl-diphosphatase activity"/>
    <property type="evidence" value="ECO:0000318"/>
    <property type="project" value="GO_Central"/>
</dbReference>
<dbReference type="GO" id="GO:0071555">
    <property type="term" value="P:cell wall organization"/>
    <property type="evidence" value="ECO:0007669"/>
    <property type="project" value="UniProtKB-KW"/>
</dbReference>
<dbReference type="GO" id="GO:0009252">
    <property type="term" value="P:peptidoglycan biosynthetic process"/>
    <property type="evidence" value="ECO:0007669"/>
    <property type="project" value="UniProtKB-KW"/>
</dbReference>
<dbReference type="GO" id="GO:0000270">
    <property type="term" value="P:peptidoglycan metabolic process"/>
    <property type="evidence" value="ECO:0000318"/>
    <property type="project" value="GO_Central"/>
</dbReference>
<dbReference type="GO" id="GO:0008360">
    <property type="term" value="P:regulation of cell shape"/>
    <property type="evidence" value="ECO:0007669"/>
    <property type="project" value="UniProtKB-KW"/>
</dbReference>
<dbReference type="GO" id="GO:0046677">
    <property type="term" value="P:response to antibiotic"/>
    <property type="evidence" value="ECO:0007669"/>
    <property type="project" value="UniProtKB-UniRule"/>
</dbReference>
<dbReference type="HAMAP" id="MF_01006">
    <property type="entry name" value="Undec_diphosphatase"/>
    <property type="match status" value="1"/>
</dbReference>
<dbReference type="InterPro" id="IPR003824">
    <property type="entry name" value="UppP"/>
</dbReference>
<dbReference type="NCBIfam" id="NF001390">
    <property type="entry name" value="PRK00281.1-4"/>
    <property type="match status" value="1"/>
</dbReference>
<dbReference type="NCBIfam" id="TIGR00753">
    <property type="entry name" value="undec_PP_bacA"/>
    <property type="match status" value="1"/>
</dbReference>
<dbReference type="PANTHER" id="PTHR30622">
    <property type="entry name" value="UNDECAPRENYL-DIPHOSPHATASE"/>
    <property type="match status" value="1"/>
</dbReference>
<dbReference type="PANTHER" id="PTHR30622:SF3">
    <property type="entry name" value="UNDECAPRENYL-DIPHOSPHATASE"/>
    <property type="match status" value="1"/>
</dbReference>
<dbReference type="Pfam" id="PF02673">
    <property type="entry name" value="BacA"/>
    <property type="match status" value="1"/>
</dbReference>
<proteinExistence type="inferred from homology"/>
<keyword id="KW-0046">Antibiotic resistance</keyword>
<keyword id="KW-1003">Cell membrane</keyword>
<keyword id="KW-0133">Cell shape</keyword>
<keyword id="KW-0961">Cell wall biogenesis/degradation</keyword>
<keyword id="KW-0378">Hydrolase</keyword>
<keyword id="KW-0472">Membrane</keyword>
<keyword id="KW-0573">Peptidoglycan synthesis</keyword>
<keyword id="KW-1185">Reference proteome</keyword>
<keyword id="KW-0812">Transmembrane</keyword>
<keyword id="KW-1133">Transmembrane helix</keyword>